<protein>
    <recommendedName>
        <fullName evidence="1">Iron-sulfur cluster assembly protein CyaY</fullName>
    </recommendedName>
</protein>
<accession>P56993</accession>
<accession>A1IPS7</accession>
<comment type="function">
    <text evidence="1">Involved in iron-sulfur (Fe-S) cluster assembly. May act as a regulator of Fe-S biogenesis.</text>
</comment>
<comment type="similarity">
    <text evidence="1 2">Belongs to the frataxin family.</text>
</comment>
<sequence>MMTESEFIRASEALFEHIEDQIDENGWDFDCRFAGNVLTIEAGDGTQIIVNRHTPNQELWIAAKSGGYHFAEQNGKWLATRDSRDFYDVLNEALSAASGEAVKIAEL</sequence>
<evidence type="ECO:0000255" key="1">
    <source>
        <dbReference type="HAMAP-Rule" id="MF_00142"/>
    </source>
</evidence>
<evidence type="ECO:0000305" key="2"/>
<keyword id="KW-0408">Iron</keyword>
<keyword id="KW-0479">Metal-binding</keyword>
<proteinExistence type="inferred from homology"/>
<feature type="chain" id="PRO_0000193945" description="Iron-sulfur cluster assembly protein CyaY">
    <location>
        <begin position="1"/>
        <end position="107"/>
    </location>
</feature>
<organism>
    <name type="scientific">Neisseria meningitidis serogroup A / serotype 4A (strain DSM 15465 / Z2491)</name>
    <dbReference type="NCBI Taxonomy" id="122587"/>
    <lineage>
        <taxon>Bacteria</taxon>
        <taxon>Pseudomonadati</taxon>
        <taxon>Pseudomonadota</taxon>
        <taxon>Betaproteobacteria</taxon>
        <taxon>Neisseriales</taxon>
        <taxon>Neisseriaceae</taxon>
        <taxon>Neisseria</taxon>
    </lineage>
</organism>
<name>CYAY_NEIMA</name>
<gene>
    <name evidence="1" type="primary">cyaY</name>
    <name type="ordered locus">NMA0466</name>
</gene>
<reference key="1">
    <citation type="journal article" date="2000" name="Nature">
        <title>Complete DNA sequence of a serogroup A strain of Neisseria meningitidis Z2491.</title>
        <authorList>
            <person name="Parkhill J."/>
            <person name="Achtman M."/>
            <person name="James K.D."/>
            <person name="Bentley S.D."/>
            <person name="Churcher C.M."/>
            <person name="Klee S.R."/>
            <person name="Morelli G."/>
            <person name="Basham D."/>
            <person name="Brown D."/>
            <person name="Chillingworth T."/>
            <person name="Davies R.M."/>
            <person name="Davis P."/>
            <person name="Devlin K."/>
            <person name="Feltwell T."/>
            <person name="Hamlin N."/>
            <person name="Holroyd S."/>
            <person name="Jagels K."/>
            <person name="Leather S."/>
            <person name="Moule S."/>
            <person name="Mungall K.L."/>
            <person name="Quail M.A."/>
            <person name="Rajandream M.A."/>
            <person name="Rutherford K.M."/>
            <person name="Simmonds M."/>
            <person name="Skelton J."/>
            <person name="Whitehead S."/>
            <person name="Spratt B.G."/>
            <person name="Barrell B.G."/>
        </authorList>
    </citation>
    <scope>NUCLEOTIDE SEQUENCE [LARGE SCALE GENOMIC DNA]</scope>
    <source>
        <strain>DSM 15465 / Z2491</strain>
    </source>
</reference>
<dbReference type="EMBL" id="AL157959">
    <property type="protein sequence ID" value="CAM07748.1"/>
    <property type="molecule type" value="Genomic_DNA"/>
</dbReference>
<dbReference type="PIR" id="B81964">
    <property type="entry name" value="B81964"/>
</dbReference>
<dbReference type="RefSeq" id="WP_002223115.1">
    <property type="nucleotide sequence ID" value="NC_003116.1"/>
</dbReference>
<dbReference type="SMR" id="P56993"/>
<dbReference type="EnsemblBacteria" id="CAM07748">
    <property type="protein sequence ID" value="CAM07748"/>
    <property type="gene ID" value="NMA0466"/>
</dbReference>
<dbReference type="KEGG" id="nma:NMA0466"/>
<dbReference type="HOGENOM" id="CLU_080880_3_0_4"/>
<dbReference type="Proteomes" id="UP000000626">
    <property type="component" value="Chromosome"/>
</dbReference>
<dbReference type="GO" id="GO:0005737">
    <property type="term" value="C:cytoplasm"/>
    <property type="evidence" value="ECO:0007669"/>
    <property type="project" value="UniProtKB-ARBA"/>
</dbReference>
<dbReference type="GO" id="GO:0008199">
    <property type="term" value="F:ferric iron binding"/>
    <property type="evidence" value="ECO:0007669"/>
    <property type="project" value="InterPro"/>
</dbReference>
<dbReference type="GO" id="GO:0016226">
    <property type="term" value="P:iron-sulfur cluster assembly"/>
    <property type="evidence" value="ECO:0007669"/>
    <property type="project" value="UniProtKB-UniRule"/>
</dbReference>
<dbReference type="CDD" id="cd00503">
    <property type="entry name" value="Frataxin"/>
    <property type="match status" value="1"/>
</dbReference>
<dbReference type="Gene3D" id="3.30.920.10">
    <property type="entry name" value="Frataxin/CyaY"/>
    <property type="match status" value="1"/>
</dbReference>
<dbReference type="HAMAP" id="MF_00142">
    <property type="entry name" value="CyaY"/>
    <property type="match status" value="1"/>
</dbReference>
<dbReference type="InterPro" id="IPR047584">
    <property type="entry name" value="CyaY"/>
</dbReference>
<dbReference type="InterPro" id="IPR002908">
    <property type="entry name" value="Frataxin/CyaY"/>
</dbReference>
<dbReference type="InterPro" id="IPR036524">
    <property type="entry name" value="Frataxin/CyaY_sf"/>
</dbReference>
<dbReference type="InterPro" id="IPR020895">
    <property type="entry name" value="Frataxin_CS"/>
</dbReference>
<dbReference type="NCBIfam" id="TIGR03421">
    <property type="entry name" value="FeS_CyaY"/>
    <property type="match status" value="1"/>
</dbReference>
<dbReference type="PANTHER" id="PTHR16821">
    <property type="entry name" value="FRATAXIN"/>
    <property type="match status" value="1"/>
</dbReference>
<dbReference type="PANTHER" id="PTHR16821:SF2">
    <property type="entry name" value="FRATAXIN, MITOCHONDRIAL"/>
    <property type="match status" value="1"/>
</dbReference>
<dbReference type="Pfam" id="PF01491">
    <property type="entry name" value="Frataxin_Cyay"/>
    <property type="match status" value="1"/>
</dbReference>
<dbReference type="SMART" id="SM01219">
    <property type="entry name" value="Frataxin_Cyay"/>
    <property type="match status" value="1"/>
</dbReference>
<dbReference type="SUPFAM" id="SSF55387">
    <property type="entry name" value="Frataxin/Nqo15-like"/>
    <property type="match status" value="1"/>
</dbReference>
<dbReference type="PROSITE" id="PS01344">
    <property type="entry name" value="FRATAXIN_1"/>
    <property type="match status" value="1"/>
</dbReference>
<dbReference type="PROSITE" id="PS50810">
    <property type="entry name" value="FRATAXIN_2"/>
    <property type="match status" value="1"/>
</dbReference>